<evidence type="ECO:0000250" key="1"/>
<evidence type="ECO:0000305" key="2"/>
<feature type="chain" id="PRO_0000114564" description="Alanine racemase, biosynthetic">
    <location>
        <begin position="1"/>
        <end position="359"/>
    </location>
</feature>
<feature type="active site" description="Proton acceptor; specific for D-alanine" evidence="1">
    <location>
        <position position="34"/>
    </location>
</feature>
<feature type="active site" description="Proton acceptor; specific for L-alanine" evidence="1">
    <location>
        <position position="255"/>
    </location>
</feature>
<feature type="binding site" evidence="1">
    <location>
        <position position="129"/>
    </location>
    <ligand>
        <name>substrate</name>
    </ligand>
</feature>
<feature type="binding site" evidence="1">
    <location>
        <position position="303"/>
    </location>
    <ligand>
        <name>substrate</name>
    </ligand>
</feature>
<feature type="modified residue" description="N6-(pyridoxal phosphate)lysine" evidence="1">
    <location>
        <position position="34"/>
    </location>
</feature>
<dbReference type="EC" id="5.1.1.1"/>
<dbReference type="EMBL" id="AB069859">
    <property type="protein sequence ID" value="BAB71770.1"/>
    <property type="molecule type" value="Genomic_DNA"/>
</dbReference>
<dbReference type="RefSeq" id="WP_001147344.1">
    <property type="nucleotide sequence ID" value="NZ_UYIT01000003.1"/>
</dbReference>
<dbReference type="SMR" id="Q932V0"/>
<dbReference type="BRENDA" id="5.1.1.1">
    <property type="organism ID" value="5711"/>
</dbReference>
<dbReference type="UniPathway" id="UPA00042">
    <property type="reaction ID" value="UER00497"/>
</dbReference>
<dbReference type="UniPathway" id="UPA00219"/>
<dbReference type="GO" id="GO:0005829">
    <property type="term" value="C:cytosol"/>
    <property type="evidence" value="ECO:0007669"/>
    <property type="project" value="TreeGrafter"/>
</dbReference>
<dbReference type="GO" id="GO:0008784">
    <property type="term" value="F:alanine racemase activity"/>
    <property type="evidence" value="ECO:0007669"/>
    <property type="project" value="UniProtKB-UniRule"/>
</dbReference>
<dbReference type="GO" id="GO:0030170">
    <property type="term" value="F:pyridoxal phosphate binding"/>
    <property type="evidence" value="ECO:0007669"/>
    <property type="project" value="UniProtKB-UniRule"/>
</dbReference>
<dbReference type="GO" id="GO:0071555">
    <property type="term" value="P:cell wall organization"/>
    <property type="evidence" value="ECO:0007669"/>
    <property type="project" value="UniProtKB-KW"/>
</dbReference>
<dbReference type="GO" id="GO:0030632">
    <property type="term" value="P:D-alanine biosynthetic process"/>
    <property type="evidence" value="ECO:0007669"/>
    <property type="project" value="UniProtKB-UniRule"/>
</dbReference>
<dbReference type="GO" id="GO:0009252">
    <property type="term" value="P:peptidoglycan biosynthetic process"/>
    <property type="evidence" value="ECO:0007669"/>
    <property type="project" value="UniProtKB-UniPathway"/>
</dbReference>
<dbReference type="GO" id="GO:0008360">
    <property type="term" value="P:regulation of cell shape"/>
    <property type="evidence" value="ECO:0007669"/>
    <property type="project" value="UniProtKB-KW"/>
</dbReference>
<dbReference type="CDD" id="cd06827">
    <property type="entry name" value="PLPDE_III_AR_proteobact"/>
    <property type="match status" value="1"/>
</dbReference>
<dbReference type="FunFam" id="2.40.37.10:FF:000002">
    <property type="entry name" value="Alanine racemase"/>
    <property type="match status" value="1"/>
</dbReference>
<dbReference type="FunFam" id="3.20.20.10:FF:000002">
    <property type="entry name" value="Alanine racemase"/>
    <property type="match status" value="1"/>
</dbReference>
<dbReference type="Gene3D" id="3.20.20.10">
    <property type="entry name" value="Alanine racemase"/>
    <property type="match status" value="1"/>
</dbReference>
<dbReference type="Gene3D" id="2.40.37.10">
    <property type="entry name" value="Lyase, Ornithine Decarboxylase, Chain A, domain 1"/>
    <property type="match status" value="1"/>
</dbReference>
<dbReference type="HAMAP" id="MF_01201">
    <property type="entry name" value="Ala_racemase"/>
    <property type="match status" value="1"/>
</dbReference>
<dbReference type="InterPro" id="IPR000821">
    <property type="entry name" value="Ala_racemase"/>
</dbReference>
<dbReference type="InterPro" id="IPR009006">
    <property type="entry name" value="Ala_racemase/Decarboxylase_C"/>
</dbReference>
<dbReference type="InterPro" id="IPR011079">
    <property type="entry name" value="Ala_racemase_C"/>
</dbReference>
<dbReference type="InterPro" id="IPR001608">
    <property type="entry name" value="Ala_racemase_N"/>
</dbReference>
<dbReference type="InterPro" id="IPR020622">
    <property type="entry name" value="Ala_racemase_pyridoxalP-BS"/>
</dbReference>
<dbReference type="InterPro" id="IPR029066">
    <property type="entry name" value="PLP-binding_barrel"/>
</dbReference>
<dbReference type="NCBIfam" id="TIGR00492">
    <property type="entry name" value="alr"/>
    <property type="match status" value="1"/>
</dbReference>
<dbReference type="PANTHER" id="PTHR30511">
    <property type="entry name" value="ALANINE RACEMASE"/>
    <property type="match status" value="1"/>
</dbReference>
<dbReference type="PANTHER" id="PTHR30511:SF4">
    <property type="entry name" value="ALANINE RACEMASE, BIOSYNTHETIC"/>
    <property type="match status" value="1"/>
</dbReference>
<dbReference type="Pfam" id="PF00842">
    <property type="entry name" value="Ala_racemase_C"/>
    <property type="match status" value="1"/>
</dbReference>
<dbReference type="Pfam" id="PF01168">
    <property type="entry name" value="Ala_racemase_N"/>
    <property type="match status" value="1"/>
</dbReference>
<dbReference type="PRINTS" id="PR00992">
    <property type="entry name" value="ALARACEMASE"/>
</dbReference>
<dbReference type="SMART" id="SM01005">
    <property type="entry name" value="Ala_racemase_C"/>
    <property type="match status" value="1"/>
</dbReference>
<dbReference type="SUPFAM" id="SSF50621">
    <property type="entry name" value="Alanine racemase C-terminal domain-like"/>
    <property type="match status" value="1"/>
</dbReference>
<dbReference type="SUPFAM" id="SSF51419">
    <property type="entry name" value="PLP-binding barrel"/>
    <property type="match status" value="1"/>
</dbReference>
<dbReference type="PROSITE" id="PS00395">
    <property type="entry name" value="ALANINE_RACEMASE"/>
    <property type="match status" value="1"/>
</dbReference>
<gene>
    <name type="primary">alr</name>
</gene>
<name>ALR1_SHIDY</name>
<protein>
    <recommendedName>
        <fullName>Alanine racemase, biosynthetic</fullName>
        <ecNumber>5.1.1.1</ecNumber>
    </recommendedName>
</protein>
<reference key="1">
    <citation type="journal article" date="2001" name="Biochem. Biophys. Res. Commun.">
        <title>Gene cloning and characterization of alanine racemases from Shigella dysenteriae, Shigella boydii, Shigella flexneri, and Shigella sonnei.</title>
        <authorList>
            <person name="Yokoigawa K."/>
            <person name="Hirasawa R."/>
            <person name="Ueno H."/>
            <person name="Okubo Y."/>
            <person name="Umesako S."/>
            <person name="Soda K."/>
        </authorList>
    </citation>
    <scope>NUCLEOTIDE SEQUENCE [GENOMIC DNA]</scope>
    <scope>PROTEIN SEQUENCE OF 1-21</scope>
</reference>
<keyword id="KW-0133">Cell shape</keyword>
<keyword id="KW-0961">Cell wall biogenesis/degradation</keyword>
<keyword id="KW-0903">Direct protein sequencing</keyword>
<keyword id="KW-0413">Isomerase</keyword>
<keyword id="KW-0573">Peptidoglycan synthesis</keyword>
<keyword id="KW-0663">Pyridoxal phosphate</keyword>
<organism>
    <name type="scientific">Shigella dysenteriae</name>
    <dbReference type="NCBI Taxonomy" id="622"/>
    <lineage>
        <taxon>Bacteria</taxon>
        <taxon>Pseudomonadati</taxon>
        <taxon>Pseudomonadota</taxon>
        <taxon>Gammaproteobacteria</taxon>
        <taxon>Enterobacterales</taxon>
        <taxon>Enterobacteriaceae</taxon>
        <taxon>Shigella</taxon>
    </lineage>
</organism>
<proteinExistence type="evidence at protein level"/>
<accession>Q932V0</accession>
<sequence length="359" mass="39081">MQAATVVINRRALRHNLQRLRELAPASKMVAVVKANAYGHGLLETARTLPDADAFGVARLEEALRLRAGGITKPVLLLEGFFDARDLPTISAQHFHTAVHNEEQLAALEEASLDEPVTVWMKLDTGMHRLGVRPEQAGAFYHRLTQCKNVRQPVNIVSHFARADEPKCGATEKQLAIFNTFCEGKPGQRSIAASGGILLWPQSHFDWVRPGIILYGVSPLEDRSTGADFGCQPVMSLTSSLIAVREHKAGEPVGYGGTWVSERDTRLGVVAMGYGDGYPRAAPSGTPVLVNGREVPIVGRVAMDMICVDLGPQAQDKAGDPVILWGEGLPVERIAEMTKVSAYELITRLTSRVAMKYVD</sequence>
<comment type="function">
    <text>Catalyzes the interconversion of L-alanine and D-alanine.</text>
</comment>
<comment type="catalytic activity">
    <reaction>
        <text>L-alanine = D-alanine</text>
        <dbReference type="Rhea" id="RHEA:20249"/>
        <dbReference type="ChEBI" id="CHEBI:57416"/>
        <dbReference type="ChEBI" id="CHEBI:57972"/>
        <dbReference type="EC" id="5.1.1.1"/>
    </reaction>
</comment>
<comment type="cofactor">
    <cofactor>
        <name>pyridoxal 5'-phosphate</name>
        <dbReference type="ChEBI" id="CHEBI:597326"/>
    </cofactor>
</comment>
<comment type="biophysicochemical properties">
    <phDependence>
        <text>Optimum pH is 8-10.</text>
    </phDependence>
    <temperatureDependence>
        <text>Optimum temperature is 50 degrees Celsius.</text>
    </temperatureDependence>
</comment>
<comment type="pathway">
    <text>Amino-acid biosynthesis; D-alanine biosynthesis; D-alanine from L-alanine: step 1/1.</text>
</comment>
<comment type="pathway">
    <text>Cell wall biogenesis; peptidoglycan biosynthesis.</text>
</comment>
<comment type="subunit">
    <text>Monomer but homodimer in the presence of the substrate.</text>
</comment>
<comment type="similarity">
    <text evidence="2">Belongs to the alanine racemase family.</text>
</comment>